<organism>
    <name type="scientific">Streptococcus pneumoniae serotype 4 (strain ATCC BAA-334 / TIGR4)</name>
    <dbReference type="NCBI Taxonomy" id="170187"/>
    <lineage>
        <taxon>Bacteria</taxon>
        <taxon>Bacillati</taxon>
        <taxon>Bacillota</taxon>
        <taxon>Bacilli</taxon>
        <taxon>Lactobacillales</taxon>
        <taxon>Streptococcaceae</taxon>
        <taxon>Streptococcus</taxon>
    </lineage>
</organism>
<name>RPOE_STRPN</name>
<dbReference type="EMBL" id="AE005672">
    <property type="protein sequence ID" value="AAK74651.1"/>
    <property type="molecule type" value="Genomic_DNA"/>
</dbReference>
<dbReference type="PIR" id="B95057">
    <property type="entry name" value="B95057"/>
</dbReference>
<dbReference type="SMR" id="P66717"/>
<dbReference type="PaxDb" id="170187-SP_0493"/>
<dbReference type="EnsemblBacteria" id="AAK74651">
    <property type="protein sequence ID" value="AAK74651"/>
    <property type="gene ID" value="SP_0493"/>
</dbReference>
<dbReference type="KEGG" id="spn:SP_0493"/>
<dbReference type="eggNOG" id="COG3343">
    <property type="taxonomic scope" value="Bacteria"/>
</dbReference>
<dbReference type="PhylomeDB" id="P66717"/>
<dbReference type="BioCyc" id="SPNE170187:G1FZB-508-MONOMER"/>
<dbReference type="Proteomes" id="UP000000585">
    <property type="component" value="Chromosome"/>
</dbReference>
<dbReference type="GO" id="GO:0000428">
    <property type="term" value="C:DNA-directed RNA polymerase complex"/>
    <property type="evidence" value="ECO:0007669"/>
    <property type="project" value="UniProtKB-KW"/>
</dbReference>
<dbReference type="GO" id="GO:0003899">
    <property type="term" value="F:DNA-directed RNA polymerase activity"/>
    <property type="evidence" value="ECO:0007669"/>
    <property type="project" value="UniProtKB-UniRule"/>
</dbReference>
<dbReference type="GO" id="GO:0006351">
    <property type="term" value="P:DNA-templated transcription"/>
    <property type="evidence" value="ECO:0007669"/>
    <property type="project" value="InterPro"/>
</dbReference>
<dbReference type="GO" id="GO:0006355">
    <property type="term" value="P:regulation of DNA-templated transcription"/>
    <property type="evidence" value="ECO:0007669"/>
    <property type="project" value="UniProtKB-UniRule"/>
</dbReference>
<dbReference type="Gene3D" id="1.10.10.1250">
    <property type="entry name" value="RNA polymerase, subunit delta, N-terminal domain"/>
    <property type="match status" value="1"/>
</dbReference>
<dbReference type="HAMAP" id="MF_00357">
    <property type="entry name" value="RNApol_bact_RpoE"/>
    <property type="match status" value="1"/>
</dbReference>
<dbReference type="InterPro" id="IPR007759">
    <property type="entry name" value="Asxl_HARE-HTH"/>
</dbReference>
<dbReference type="InterPro" id="IPR038087">
    <property type="entry name" value="RNAP_delta_N_dom_sf"/>
</dbReference>
<dbReference type="InterPro" id="IPR029757">
    <property type="entry name" value="RpoE"/>
</dbReference>
<dbReference type="NCBIfam" id="TIGR04567">
    <property type="entry name" value="RNAP_delt_lowGC"/>
    <property type="match status" value="1"/>
</dbReference>
<dbReference type="Pfam" id="PF05066">
    <property type="entry name" value="HARE-HTH"/>
    <property type="match status" value="1"/>
</dbReference>
<dbReference type="PROSITE" id="PS51913">
    <property type="entry name" value="HTH_HARE"/>
    <property type="match status" value="1"/>
</dbReference>
<gene>
    <name evidence="1" type="primary">rpoE</name>
    <name type="ordered locus">SP_0493</name>
</gene>
<evidence type="ECO:0000255" key="1">
    <source>
        <dbReference type="HAMAP-Rule" id="MF_00357"/>
    </source>
</evidence>
<evidence type="ECO:0000255" key="2">
    <source>
        <dbReference type="PROSITE-ProRule" id="PRU01261"/>
    </source>
</evidence>
<evidence type="ECO:0000256" key="3">
    <source>
        <dbReference type="SAM" id="MobiDB-lite"/>
    </source>
</evidence>
<proteinExistence type="inferred from homology"/>
<sequence>MRRNALELEVFAGQEKSELSMIEVARAILELRGRDHEMHFSDLVNEIQNYLGTSNSDIREALPLFYTELNFDGSFISLGDNKWGLRSWYGVDEIDEEIIALEENDDDEVAPKAKKKRVNAFMDGDSDAIDYNADDPEDEDAYEADPALSYDDENPDDEKNEVEAYDAEINEIAPDDLGEDVDLNEDDDEFSDDDAETSEE</sequence>
<accession>P66717</accession>
<accession>Q97S94</accession>
<protein>
    <recommendedName>
        <fullName evidence="1">Probable DNA-directed RNA polymerase subunit delta</fullName>
    </recommendedName>
    <alternativeName>
        <fullName evidence="1">RNAP delta factor</fullName>
    </alternativeName>
</protein>
<reference key="1">
    <citation type="journal article" date="2001" name="Science">
        <title>Complete genome sequence of a virulent isolate of Streptococcus pneumoniae.</title>
        <authorList>
            <person name="Tettelin H."/>
            <person name="Nelson K.E."/>
            <person name="Paulsen I.T."/>
            <person name="Eisen J.A."/>
            <person name="Read T.D."/>
            <person name="Peterson S.N."/>
            <person name="Heidelberg J.F."/>
            <person name="DeBoy R.T."/>
            <person name="Haft D.H."/>
            <person name="Dodson R.J."/>
            <person name="Durkin A.S."/>
            <person name="Gwinn M.L."/>
            <person name="Kolonay J.F."/>
            <person name="Nelson W.C."/>
            <person name="Peterson J.D."/>
            <person name="Umayam L.A."/>
            <person name="White O."/>
            <person name="Salzberg S.L."/>
            <person name="Lewis M.R."/>
            <person name="Radune D."/>
            <person name="Holtzapple E.K."/>
            <person name="Khouri H.M."/>
            <person name="Wolf A.M."/>
            <person name="Utterback T.R."/>
            <person name="Hansen C.L."/>
            <person name="McDonald L.A."/>
            <person name="Feldblyum T.V."/>
            <person name="Angiuoli S.V."/>
            <person name="Dickinson T."/>
            <person name="Hickey E.K."/>
            <person name="Holt I.E."/>
            <person name="Loftus B.J."/>
            <person name="Yang F."/>
            <person name="Smith H.O."/>
            <person name="Venter J.C."/>
            <person name="Dougherty B.A."/>
            <person name="Morrison D.A."/>
            <person name="Hollingshead S.K."/>
            <person name="Fraser C.M."/>
        </authorList>
    </citation>
    <scope>NUCLEOTIDE SEQUENCE [LARGE SCALE GENOMIC DNA]</scope>
    <source>
        <strain>ATCC BAA-334 / TIGR4</strain>
    </source>
</reference>
<feature type="chain" id="PRO_0000204329" description="Probable DNA-directed RNA polymerase subunit delta">
    <location>
        <begin position="1"/>
        <end position="200"/>
    </location>
</feature>
<feature type="domain" description="HTH HARE-type" evidence="2">
    <location>
        <begin position="19"/>
        <end position="88"/>
    </location>
</feature>
<feature type="region of interest" description="Disordered" evidence="3">
    <location>
        <begin position="125"/>
        <end position="200"/>
    </location>
</feature>
<feature type="compositionally biased region" description="Acidic residues" evidence="3">
    <location>
        <begin position="125"/>
        <end position="143"/>
    </location>
</feature>
<feature type="compositionally biased region" description="Acidic residues" evidence="3">
    <location>
        <begin position="150"/>
        <end position="200"/>
    </location>
</feature>
<keyword id="KW-0240">DNA-directed RNA polymerase</keyword>
<keyword id="KW-0548">Nucleotidyltransferase</keyword>
<keyword id="KW-1185">Reference proteome</keyword>
<keyword id="KW-0804">Transcription</keyword>
<keyword id="KW-0808">Transferase</keyword>
<comment type="function">
    <text evidence="1">Participates in both the initiation and recycling phases of transcription. In the presence of the delta subunit, RNAP displays an increased specificity of transcription, a decreased affinity for nucleic acids, and an increased efficiency of RNA synthesis because of enhanced recycling.</text>
</comment>
<comment type="subunit">
    <text evidence="1">RNAP is composed of a core of 2 alpha, a beta and a beta' subunits. The core is associated with a delta subunit and one of several sigma factors.</text>
</comment>
<comment type="similarity">
    <text evidence="1">Belongs to the RpoE family.</text>
</comment>